<dbReference type="EMBL" id="U20142">
    <property type="protein sequence ID" value="AAB60235.1"/>
    <property type="molecule type" value="Genomic_DNA"/>
</dbReference>
<dbReference type="EMBL" id="Z70686">
    <property type="protein sequence ID" value="CAA94610.1"/>
    <property type="molecule type" value="Genomic_DNA"/>
</dbReference>
<dbReference type="PIR" id="T24152">
    <property type="entry name" value="T24152"/>
</dbReference>
<dbReference type="RefSeq" id="NP_501919.1">
    <property type="nucleotide sequence ID" value="NM_069518.5"/>
</dbReference>
<dbReference type="SMR" id="Q10579"/>
<dbReference type="BioGRID" id="43031">
    <property type="interactions" value="2"/>
</dbReference>
<dbReference type="DIP" id="DIP-24461N"/>
<dbReference type="FunCoup" id="Q10579">
    <property type="interactions" value="260"/>
</dbReference>
<dbReference type="STRING" id="6239.R10H10.2.1"/>
<dbReference type="PaxDb" id="6239-R10H10.2"/>
<dbReference type="EnsemblMetazoa" id="R10H10.2.1">
    <property type="protein sequence ID" value="R10H10.2.1"/>
    <property type="gene ID" value="WBGene00004972"/>
</dbReference>
<dbReference type="GeneID" id="177929"/>
<dbReference type="KEGG" id="cel:CELE_R10H10.2"/>
<dbReference type="UCSC" id="R10H10.2">
    <property type="organism name" value="c. elegans"/>
</dbReference>
<dbReference type="AGR" id="WB:WBGene00004972"/>
<dbReference type="CTD" id="177929"/>
<dbReference type="WormBase" id="R10H10.2">
    <property type="protein sequence ID" value="CE06293"/>
    <property type="gene ID" value="WBGene00004972"/>
    <property type="gene designation" value="spe-26"/>
</dbReference>
<dbReference type="eggNOG" id="KOG1072">
    <property type="taxonomic scope" value="Eukaryota"/>
</dbReference>
<dbReference type="GeneTree" id="ENSGT00940000163715"/>
<dbReference type="HOGENOM" id="CLU_471929_0_0_1"/>
<dbReference type="InParanoid" id="Q10579"/>
<dbReference type="OMA" id="HDMRSDC"/>
<dbReference type="OrthoDB" id="5775046at2759"/>
<dbReference type="PhylomeDB" id="Q10579"/>
<dbReference type="PRO" id="PR:Q10579"/>
<dbReference type="Proteomes" id="UP000001940">
    <property type="component" value="Chromosome IV"/>
</dbReference>
<dbReference type="Bgee" id="WBGene00004972">
    <property type="expression patterns" value="Expressed in germ cell and 6 other cell types or tissues"/>
</dbReference>
<dbReference type="GO" id="GO:0031463">
    <property type="term" value="C:Cul3-RING ubiquitin ligase complex"/>
    <property type="evidence" value="ECO:0000318"/>
    <property type="project" value="GO_Central"/>
</dbReference>
<dbReference type="GO" id="GO:0005737">
    <property type="term" value="C:cytoplasm"/>
    <property type="evidence" value="ECO:0000318"/>
    <property type="project" value="GO_Central"/>
</dbReference>
<dbReference type="GO" id="GO:0005856">
    <property type="term" value="C:cytoskeleton"/>
    <property type="evidence" value="ECO:0007669"/>
    <property type="project" value="UniProtKB-SubCell"/>
</dbReference>
<dbReference type="GO" id="GO:0003779">
    <property type="term" value="F:actin binding"/>
    <property type="evidence" value="ECO:0007669"/>
    <property type="project" value="UniProtKB-KW"/>
</dbReference>
<dbReference type="GO" id="GO:1990756">
    <property type="term" value="F:ubiquitin-like ligase-substrate adaptor activity"/>
    <property type="evidence" value="ECO:0000318"/>
    <property type="project" value="GO_Central"/>
</dbReference>
<dbReference type="GO" id="GO:0043161">
    <property type="term" value="P:proteasome-mediated ubiquitin-dependent protein catabolic process"/>
    <property type="evidence" value="ECO:0000318"/>
    <property type="project" value="GO_Central"/>
</dbReference>
<dbReference type="Gene3D" id="1.25.40.420">
    <property type="match status" value="1"/>
</dbReference>
<dbReference type="Gene3D" id="2.120.10.80">
    <property type="entry name" value="Kelch-type beta propeller"/>
    <property type="match status" value="2"/>
</dbReference>
<dbReference type="InterPro" id="IPR011705">
    <property type="entry name" value="BACK"/>
</dbReference>
<dbReference type="InterPro" id="IPR015915">
    <property type="entry name" value="Kelch-typ_b-propeller"/>
</dbReference>
<dbReference type="InterPro" id="IPR006652">
    <property type="entry name" value="Kelch_1"/>
</dbReference>
<dbReference type="PANTHER" id="PTHR45632:SF3">
    <property type="entry name" value="KELCH-LIKE PROTEIN 32"/>
    <property type="match status" value="1"/>
</dbReference>
<dbReference type="PANTHER" id="PTHR45632">
    <property type="entry name" value="LD33804P"/>
    <property type="match status" value="1"/>
</dbReference>
<dbReference type="Pfam" id="PF07707">
    <property type="entry name" value="BACK"/>
    <property type="match status" value="1"/>
</dbReference>
<dbReference type="Pfam" id="PF01344">
    <property type="entry name" value="Kelch_1"/>
    <property type="match status" value="1"/>
</dbReference>
<dbReference type="Pfam" id="PF24681">
    <property type="entry name" value="Kelch_KLHDC2_KLHL20_DRC7"/>
    <property type="match status" value="1"/>
</dbReference>
<dbReference type="SMART" id="SM00875">
    <property type="entry name" value="BACK"/>
    <property type="match status" value="1"/>
</dbReference>
<dbReference type="SMART" id="SM00612">
    <property type="entry name" value="Kelch"/>
    <property type="match status" value="5"/>
</dbReference>
<dbReference type="SUPFAM" id="SSF117281">
    <property type="entry name" value="Kelch motif"/>
    <property type="match status" value="1"/>
</dbReference>
<accession>Q10579</accession>
<keyword id="KW-0009">Actin-binding</keyword>
<keyword id="KW-0963">Cytoplasm</keyword>
<keyword id="KW-0206">Cytoskeleton</keyword>
<keyword id="KW-0880">Kelch repeat</keyword>
<keyword id="KW-1185">Reference proteome</keyword>
<keyword id="KW-0677">Repeat</keyword>
<proteinExistence type="evidence at protein level"/>
<reference key="1">
    <citation type="journal article" date="1995" name="Genes Dev.">
        <title>The Caenorhabditis elegans spe-26 gene is necessary to form spermatids and encodes a protein similar to the actin-associated proteins kelch and scruin.</title>
        <authorList>
            <person name="Varkey J.P."/>
            <person name="Muhlrad P.J."/>
            <person name="Minniti A.N."/>
            <person name="Do B."/>
            <person name="Ward S."/>
        </authorList>
    </citation>
    <scope>NUCLEOTIDE SEQUENCE [GENOMIC DNA]</scope>
    <scope>FUNCTION</scope>
    <scope>TISSUE SPECIFICITY</scope>
    <scope>MUTAGENESIS OF SER-360 AND GLY-446</scope>
    <source>
        <strain>Bristol N2</strain>
    </source>
</reference>
<reference key="2">
    <citation type="journal article" date="1998" name="Science">
        <title>Genome sequence of the nematode C. elegans: a platform for investigating biology.</title>
        <authorList>
            <consortium name="The C. elegans sequencing consortium"/>
        </authorList>
    </citation>
    <scope>NUCLEOTIDE SEQUENCE [LARGE SCALE GENOMIC DNA]</scope>
    <source>
        <strain>Bristol N2</strain>
    </source>
</reference>
<name>SPE26_CAEEL</name>
<feature type="chain" id="PRO_0000119145" description="Spermatocyte protein spe-26">
    <location>
        <begin position="1"/>
        <end position="570"/>
    </location>
</feature>
<feature type="repeat" description="Kelch 1">
    <location>
        <begin position="244"/>
        <end position="291"/>
    </location>
</feature>
<feature type="repeat" description="Kelch 2">
    <location>
        <begin position="293"/>
        <end position="338"/>
    </location>
</feature>
<feature type="repeat" description="Kelch 3">
    <location>
        <begin position="341"/>
        <end position="393"/>
    </location>
</feature>
<feature type="repeat" description="Kelch 4">
    <location>
        <begin position="395"/>
        <end position="440"/>
    </location>
</feature>
<feature type="repeat" description="Kelch 5">
    <location>
        <begin position="442"/>
        <end position="487"/>
    </location>
</feature>
<feature type="repeat" description="Kelch 6">
    <location>
        <begin position="489"/>
        <end position="535"/>
    </location>
</feature>
<feature type="mutagenesis site" description="In IT112ts; causes sterility at 25 degrees Celsius." evidence="1">
    <original>S</original>
    <variation>N</variation>
    <location>
        <position position="360"/>
    </location>
</feature>
<feature type="mutagenesis site" description="In HC140ts; causes sterility at 25 degrees Celsius." evidence="1">
    <original>G</original>
    <variation>E</variation>
    <location>
        <position position="446"/>
    </location>
</feature>
<sequence length="570" mass="65552">MRFCNSKLTSIDNRCDVAIISKDEERFEVKLVESEIARELNRLGALSPRSMQKNILVPFTTQTVKYLLGLEKVSDSTDEMGWFGIEKSLEEIAGFGQHCFPKILEMKNTICDHILSTLSDVNCFLLHKKFREFDCQNHAHKTLEYILYNLARMVVVDKRVDVEFYRLPVEEVKHLLSSEEVNVEQETQIIEVINQWIAADFENRDKFRPMLMSTVRFLALDQQIAKSLSQFHPSLKPARRTRDVLIIIGGWLHRQACDRIEWFDPENNCWKVSQQKLPTTLAYHGSAIVDGILYLFGGSTGQRTRCETWKLSTETWQWDRCNNMMEPRNYISNSSVVYDGRIYVFGGQNFREITRTAVRSRTGEVFDPKTNKWTETASLSDMRSDCAAEVFENQIYVSGGFNGDMILASVEVYNPIGNVFSRTVDLPYPITGHCLLNHGNQLLIVGGFDGAERQNKIWMWHRTGEWQQRPEKLIYGRSTSAACSYKGWLFSVAGYTEKVEATCEILLPEPNASRFSFIPDVPRAKSALNVLVAPNWRNFLERRGTINEQSMEMDDDYEDDAGASYMSINN</sequence>
<gene>
    <name type="primary">spe-26</name>
    <name type="ORF">R10H10.2</name>
</gene>
<evidence type="ECO:0000269" key="1">
    <source>
    </source>
</evidence>
<protein>
    <recommendedName>
        <fullName>Spermatocyte protein spe-26</fullName>
    </recommendedName>
    <alternativeName>
        <fullName>Defective spermatogenesis protein 26</fullName>
    </alternativeName>
</protein>
<comment type="function">
    <text evidence="1">May play a role in the spermatocyte cytoskeleton, possibly interacting with actin.</text>
</comment>
<comment type="subcellular location">
    <subcellularLocation>
        <location>Cytoplasm</location>
        <location>Cytoskeleton</location>
    </subcellularLocation>
</comment>
<comment type="tissue specificity">
    <text evidence="1">Testis, in both spermatogonial cells and spermatocytes.</text>
</comment>
<organism>
    <name type="scientific">Caenorhabditis elegans</name>
    <dbReference type="NCBI Taxonomy" id="6239"/>
    <lineage>
        <taxon>Eukaryota</taxon>
        <taxon>Metazoa</taxon>
        <taxon>Ecdysozoa</taxon>
        <taxon>Nematoda</taxon>
        <taxon>Chromadorea</taxon>
        <taxon>Rhabditida</taxon>
        <taxon>Rhabditina</taxon>
        <taxon>Rhabditomorpha</taxon>
        <taxon>Rhabditoidea</taxon>
        <taxon>Rhabditidae</taxon>
        <taxon>Peloderinae</taxon>
        <taxon>Caenorhabditis</taxon>
    </lineage>
</organism>